<feature type="chain" id="PRO_0000136598" description="Tryptophan--tRNA ligase">
    <location>
        <begin position="1"/>
        <end position="395"/>
    </location>
</feature>
<feature type="region of interest" description="Insert">
    <location>
        <begin position="117"/>
        <end position="179"/>
    </location>
</feature>
<feature type="short sequence motif" description="'HIGH' region" evidence="1">
    <location>
        <begin position="9"/>
        <end position="17"/>
    </location>
</feature>
<feature type="short sequence motif" description="'KMSKS' region" evidence="1">
    <location>
        <begin position="261"/>
        <end position="265"/>
    </location>
</feature>
<feature type="binding site" evidence="1">
    <location>
        <begin position="8"/>
        <end position="10"/>
    </location>
    <ligand>
        <name>ATP</name>
        <dbReference type="ChEBI" id="CHEBI:30616"/>
    </ligand>
</feature>
<feature type="binding site" evidence="1">
    <location>
        <begin position="16"/>
        <end position="17"/>
    </location>
    <ligand>
        <name>ATP</name>
        <dbReference type="ChEBI" id="CHEBI:30616"/>
    </ligand>
</feature>
<feature type="binding site" evidence="1">
    <location>
        <position position="204"/>
    </location>
    <ligand>
        <name>L-tryptophan</name>
        <dbReference type="ChEBI" id="CHEBI:57912"/>
    </ligand>
</feature>
<feature type="binding site" evidence="1">
    <location>
        <begin position="216"/>
        <end position="218"/>
    </location>
    <ligand>
        <name>ATP</name>
        <dbReference type="ChEBI" id="CHEBI:30616"/>
    </ligand>
</feature>
<feature type="binding site" evidence="1">
    <location>
        <position position="254"/>
    </location>
    <ligand>
        <name>ATP</name>
        <dbReference type="ChEBI" id="CHEBI:30616"/>
    </ligand>
</feature>
<feature type="binding site" evidence="1">
    <location>
        <begin position="261"/>
        <end position="265"/>
    </location>
    <ligand>
        <name>ATP</name>
        <dbReference type="ChEBI" id="CHEBI:30616"/>
    </ligand>
</feature>
<sequence length="395" mass="46709">MRIVSGMRPTGKLHLGHYFGVIRNWVKLQEEHECFFFIADWHALTTAYKNTKELRQNIREVMIDWLALGLDPQKSVLFIQSLVKEHAELFLLFGMITPKSWLELNPTYKDLKYNLLRLTDLEKEFKEKLKERISEIVNLIPFNITKEEKFREHLLENLTQTMIEALFEGEIEPEILKRLNVSKRDFYETDTFGFLGYPVLQAADILIYKGEGVPVGEDQLPHIELSREIARRFNRLYGKIFPEPKALLTETPKIPGTDGRKMSKSYGNAVFFSDEKEEVEKKVMKMFTDPQKIRKNDPGRPEICPVFSWHKLFTKDEELVKKIEEDCRAGRLGCVECKRILLKHLEEFLEPIRERRRELEKRINEIEEVFYENSRKAREIAQKTMEEVRKAMNLP</sequence>
<proteinExistence type="inferred from homology"/>
<name>SYW_AQUAE</name>
<dbReference type="EC" id="6.1.1.2" evidence="1"/>
<dbReference type="EMBL" id="AE000657">
    <property type="protein sequence ID" value="AAC07073.1"/>
    <property type="molecule type" value="Genomic_DNA"/>
</dbReference>
<dbReference type="PIR" id="H70385">
    <property type="entry name" value="H70385"/>
</dbReference>
<dbReference type="RefSeq" id="NP_213678.1">
    <property type="nucleotide sequence ID" value="NC_000918.1"/>
</dbReference>
<dbReference type="RefSeq" id="WP_010880616.1">
    <property type="nucleotide sequence ID" value="NC_000918.1"/>
</dbReference>
<dbReference type="SMR" id="O67115"/>
<dbReference type="FunCoup" id="O67115">
    <property type="interactions" value="411"/>
</dbReference>
<dbReference type="STRING" id="224324.aq_992"/>
<dbReference type="EnsemblBacteria" id="AAC07073">
    <property type="protein sequence ID" value="AAC07073"/>
    <property type="gene ID" value="aq_992"/>
</dbReference>
<dbReference type="KEGG" id="aae:aq_992"/>
<dbReference type="PATRIC" id="fig|224324.8.peg.778"/>
<dbReference type="eggNOG" id="COG0180">
    <property type="taxonomic scope" value="Bacteria"/>
</dbReference>
<dbReference type="HOGENOM" id="CLU_029244_0_0_0"/>
<dbReference type="InParanoid" id="O67115"/>
<dbReference type="OrthoDB" id="9801042at2"/>
<dbReference type="Proteomes" id="UP000000798">
    <property type="component" value="Chromosome"/>
</dbReference>
<dbReference type="GO" id="GO:0005737">
    <property type="term" value="C:cytoplasm"/>
    <property type="evidence" value="ECO:0000318"/>
    <property type="project" value="GO_Central"/>
</dbReference>
<dbReference type="GO" id="GO:0005524">
    <property type="term" value="F:ATP binding"/>
    <property type="evidence" value="ECO:0007669"/>
    <property type="project" value="UniProtKB-UniRule"/>
</dbReference>
<dbReference type="GO" id="GO:0004830">
    <property type="term" value="F:tryptophan-tRNA ligase activity"/>
    <property type="evidence" value="ECO:0000318"/>
    <property type="project" value="GO_Central"/>
</dbReference>
<dbReference type="GO" id="GO:0006436">
    <property type="term" value="P:tryptophanyl-tRNA aminoacylation"/>
    <property type="evidence" value="ECO:0000318"/>
    <property type="project" value="GO_Central"/>
</dbReference>
<dbReference type="CDD" id="cd00806">
    <property type="entry name" value="TrpRS_core"/>
    <property type="match status" value="1"/>
</dbReference>
<dbReference type="FunFam" id="1.10.240.10:FF:000005">
    <property type="entry name" value="Tryptophan--tRNA ligase"/>
    <property type="match status" value="1"/>
</dbReference>
<dbReference type="Gene3D" id="3.40.50.620">
    <property type="entry name" value="HUPs"/>
    <property type="match status" value="1"/>
</dbReference>
<dbReference type="Gene3D" id="1.10.240.10">
    <property type="entry name" value="Tyrosyl-Transfer RNA Synthetase"/>
    <property type="match status" value="1"/>
</dbReference>
<dbReference type="HAMAP" id="MF_00140_B">
    <property type="entry name" value="Trp_tRNA_synth_B"/>
    <property type="match status" value="1"/>
</dbReference>
<dbReference type="InterPro" id="IPR001412">
    <property type="entry name" value="aa-tRNA-synth_I_CS"/>
</dbReference>
<dbReference type="InterPro" id="IPR002305">
    <property type="entry name" value="aa-tRNA-synth_Ic"/>
</dbReference>
<dbReference type="InterPro" id="IPR014729">
    <property type="entry name" value="Rossmann-like_a/b/a_fold"/>
</dbReference>
<dbReference type="InterPro" id="IPR002306">
    <property type="entry name" value="Trp-tRNA-ligase"/>
</dbReference>
<dbReference type="InterPro" id="IPR024109">
    <property type="entry name" value="Trp-tRNA-ligase_bac-type"/>
</dbReference>
<dbReference type="InterPro" id="IPR050203">
    <property type="entry name" value="Trp-tRNA_synthetase"/>
</dbReference>
<dbReference type="NCBIfam" id="TIGR00233">
    <property type="entry name" value="trpS"/>
    <property type="match status" value="1"/>
</dbReference>
<dbReference type="PANTHER" id="PTHR43766">
    <property type="entry name" value="TRYPTOPHAN--TRNA LIGASE, MITOCHONDRIAL"/>
    <property type="match status" value="1"/>
</dbReference>
<dbReference type="PANTHER" id="PTHR43766:SF1">
    <property type="entry name" value="TRYPTOPHAN--TRNA LIGASE, MITOCHONDRIAL"/>
    <property type="match status" value="1"/>
</dbReference>
<dbReference type="Pfam" id="PF00579">
    <property type="entry name" value="tRNA-synt_1b"/>
    <property type="match status" value="2"/>
</dbReference>
<dbReference type="PRINTS" id="PR01039">
    <property type="entry name" value="TRNASYNTHTRP"/>
</dbReference>
<dbReference type="SUPFAM" id="SSF52374">
    <property type="entry name" value="Nucleotidylyl transferase"/>
    <property type="match status" value="1"/>
</dbReference>
<dbReference type="PROSITE" id="PS00178">
    <property type="entry name" value="AA_TRNA_LIGASE_I"/>
    <property type="match status" value="1"/>
</dbReference>
<protein>
    <recommendedName>
        <fullName evidence="1">Tryptophan--tRNA ligase</fullName>
        <ecNumber evidence="1">6.1.1.2</ecNumber>
    </recommendedName>
    <alternativeName>
        <fullName evidence="1">Tryptophanyl-tRNA synthetase</fullName>
        <shortName evidence="1">TrpRS</shortName>
    </alternativeName>
</protein>
<reference key="1">
    <citation type="journal article" date="1998" name="Nature">
        <title>The complete genome of the hyperthermophilic bacterium Aquifex aeolicus.</title>
        <authorList>
            <person name="Deckert G."/>
            <person name="Warren P.V."/>
            <person name="Gaasterland T."/>
            <person name="Young W.G."/>
            <person name="Lenox A.L."/>
            <person name="Graham D.E."/>
            <person name="Overbeek R."/>
            <person name="Snead M.A."/>
            <person name="Keller M."/>
            <person name="Aujay M."/>
            <person name="Huber R."/>
            <person name="Feldman R.A."/>
            <person name="Short J.M."/>
            <person name="Olsen G.J."/>
            <person name="Swanson R.V."/>
        </authorList>
    </citation>
    <scope>NUCLEOTIDE SEQUENCE [LARGE SCALE GENOMIC DNA]</scope>
    <source>
        <strain>VF5</strain>
    </source>
</reference>
<keyword id="KW-0030">Aminoacyl-tRNA synthetase</keyword>
<keyword id="KW-0067">ATP-binding</keyword>
<keyword id="KW-0963">Cytoplasm</keyword>
<keyword id="KW-0436">Ligase</keyword>
<keyword id="KW-0547">Nucleotide-binding</keyword>
<keyword id="KW-0648">Protein biosynthesis</keyword>
<keyword id="KW-1185">Reference proteome</keyword>
<gene>
    <name evidence="1" type="primary">trpS</name>
    <name type="ordered locus">aq_992</name>
</gene>
<evidence type="ECO:0000255" key="1">
    <source>
        <dbReference type="HAMAP-Rule" id="MF_00140"/>
    </source>
</evidence>
<organism>
    <name type="scientific">Aquifex aeolicus (strain VF5)</name>
    <dbReference type="NCBI Taxonomy" id="224324"/>
    <lineage>
        <taxon>Bacteria</taxon>
        <taxon>Pseudomonadati</taxon>
        <taxon>Aquificota</taxon>
        <taxon>Aquificia</taxon>
        <taxon>Aquificales</taxon>
        <taxon>Aquificaceae</taxon>
        <taxon>Aquifex</taxon>
    </lineage>
</organism>
<accession>O67115</accession>
<comment type="function">
    <text evidence="1">Catalyzes the attachment of tryptophan to tRNA(Trp).</text>
</comment>
<comment type="catalytic activity">
    <reaction evidence="1">
        <text>tRNA(Trp) + L-tryptophan + ATP = L-tryptophyl-tRNA(Trp) + AMP + diphosphate + H(+)</text>
        <dbReference type="Rhea" id="RHEA:24080"/>
        <dbReference type="Rhea" id="RHEA-COMP:9671"/>
        <dbReference type="Rhea" id="RHEA-COMP:9705"/>
        <dbReference type="ChEBI" id="CHEBI:15378"/>
        <dbReference type="ChEBI" id="CHEBI:30616"/>
        <dbReference type="ChEBI" id="CHEBI:33019"/>
        <dbReference type="ChEBI" id="CHEBI:57912"/>
        <dbReference type="ChEBI" id="CHEBI:78442"/>
        <dbReference type="ChEBI" id="CHEBI:78535"/>
        <dbReference type="ChEBI" id="CHEBI:456215"/>
        <dbReference type="EC" id="6.1.1.2"/>
    </reaction>
</comment>
<comment type="subunit">
    <text evidence="1">Homodimer.</text>
</comment>
<comment type="subcellular location">
    <subcellularLocation>
        <location evidence="1">Cytoplasm</location>
    </subcellularLocation>
</comment>
<comment type="similarity">
    <text evidence="1">Belongs to the class-I aminoacyl-tRNA synthetase family.</text>
</comment>